<proteinExistence type="evidence at protein level"/>
<sequence>MSSTRSPLKTKNENTISTKMNNMSFVDKENTPPSLSSTRILASKTARKIFDESEGQSKAKKGAVEEEPLLKENPHRFVIFPIQYHDIWQMYKKAEASFWTAEEVDLSKDLQHWDSLKDEERYFISHVLAFFAASDGIVNENLVERFTQEVQVTEARCFYGFQIAMENIHSEMYSLLIDTYIKDSKEREFLFNAIETMPCVKKKADWALNWIGDKNARYGERVVAFAAVEGIFFSGSFASIFWLKKRGLMPGLTFSNELISRDEGLHCDFACLMFKHLINKPSEETVKKIIMNAVEIEQEFLTDALPVKLIGMNCDLMKQYIEFVADRLLLELGFDKVYRVENPFDFMENISLEGKTNFFEKRVGEYQRMGVMSGTTDNTFTLDADF</sequence>
<gene>
    <name type="primary">rrm2</name>
    <name type="synonym">r2</name>
</gene>
<feature type="chain" id="PRO_0000190452" description="Ribonucleoside-diphosphate reductase subunit M2">
    <location>
        <begin position="1"/>
        <end position="386"/>
    </location>
</feature>
<feature type="region of interest" description="Disordered" evidence="3">
    <location>
        <begin position="1"/>
        <end position="36"/>
    </location>
</feature>
<feature type="compositionally biased region" description="Polar residues" evidence="3">
    <location>
        <begin position="1"/>
        <end position="24"/>
    </location>
</feature>
<feature type="active site" evidence="2">
    <location>
        <position position="173"/>
    </location>
</feature>
<feature type="binding site" evidence="2">
    <location>
        <position position="135"/>
    </location>
    <ligand>
        <name>Fe cation</name>
        <dbReference type="ChEBI" id="CHEBI:24875"/>
        <label>1</label>
    </ligand>
</feature>
<feature type="binding site" evidence="2">
    <location>
        <position position="166"/>
    </location>
    <ligand>
        <name>Fe cation</name>
        <dbReference type="ChEBI" id="CHEBI:24875"/>
        <label>1</label>
    </ligand>
</feature>
<feature type="binding site" evidence="1">
    <location>
        <position position="166"/>
    </location>
    <ligand>
        <name>Fe cation</name>
        <dbReference type="ChEBI" id="CHEBI:24875"/>
        <label>2</label>
    </ligand>
</feature>
<feature type="binding site" evidence="2">
    <location>
        <position position="169"/>
    </location>
    <ligand>
        <name>Fe cation</name>
        <dbReference type="ChEBI" id="CHEBI:24875"/>
        <label>1</label>
    </ligand>
</feature>
<feature type="binding site" evidence="1">
    <location>
        <position position="229"/>
    </location>
    <ligand>
        <name>Fe cation</name>
        <dbReference type="ChEBI" id="CHEBI:24875"/>
        <label>2</label>
    </ligand>
</feature>
<feature type="binding site" evidence="1">
    <location>
        <position position="263"/>
    </location>
    <ligand>
        <name>Fe cation</name>
        <dbReference type="ChEBI" id="CHEBI:24875"/>
        <label>2</label>
    </ligand>
</feature>
<feature type="binding site" evidence="1">
    <location>
        <position position="266"/>
    </location>
    <ligand>
        <name>Fe cation</name>
        <dbReference type="ChEBI" id="CHEBI:24875"/>
        <label>2</label>
    </ligand>
</feature>
<feature type="modified residue" description="Phosphoserine" evidence="4">
    <location>
        <position position="6"/>
    </location>
</feature>
<feature type="modified residue" description="Phosphothreonine" evidence="4">
    <location>
        <position position="31"/>
    </location>
</feature>
<feature type="sequence conflict" description="In Ref. 3; AAH75746." evidence="5" ref="3">
    <original>N</original>
    <variation>S</variation>
    <location>
        <position position="279"/>
    </location>
</feature>
<keyword id="KW-0963">Cytoplasm</keyword>
<keyword id="KW-0215">Deoxyribonucleotide synthesis</keyword>
<keyword id="KW-0408">Iron</keyword>
<keyword id="KW-0479">Metal-binding</keyword>
<keyword id="KW-0560">Oxidoreductase</keyword>
<keyword id="KW-0597">Phosphoprotein</keyword>
<keyword id="KW-1185">Reference proteome</keyword>
<organism>
    <name type="scientific">Danio rerio</name>
    <name type="common">Zebrafish</name>
    <name type="synonym">Brachydanio rerio</name>
    <dbReference type="NCBI Taxonomy" id="7955"/>
    <lineage>
        <taxon>Eukaryota</taxon>
        <taxon>Metazoa</taxon>
        <taxon>Chordata</taxon>
        <taxon>Craniata</taxon>
        <taxon>Vertebrata</taxon>
        <taxon>Euteleostomi</taxon>
        <taxon>Actinopterygii</taxon>
        <taxon>Neopterygii</taxon>
        <taxon>Teleostei</taxon>
        <taxon>Ostariophysi</taxon>
        <taxon>Cypriniformes</taxon>
        <taxon>Danionidae</taxon>
        <taxon>Danioninae</taxon>
        <taxon>Danio</taxon>
    </lineage>
</organism>
<accession>P79733</accession>
<accession>Q6DI44</accession>
<reference key="1">
    <citation type="journal article" date="1996" name="Mol. Mar. Biol. Biotechnol.">
        <title>Cloning and sequencing of cDNAs encoding ribonucleotide reductase from zebrafish Danio rerio.</title>
        <authorList>
            <person name="Mathews C.Z."/>
            <person name="Sjoeberg B.-M."/>
            <person name="Karlsson M."/>
        </authorList>
    </citation>
    <scope>NUCLEOTIDE SEQUENCE [MRNA]</scope>
</reference>
<reference key="2">
    <citation type="journal article" date="2013" name="Nature">
        <title>The zebrafish reference genome sequence and its relationship to the human genome.</title>
        <authorList>
            <person name="Howe K."/>
            <person name="Clark M.D."/>
            <person name="Torroja C.F."/>
            <person name="Torrance J."/>
            <person name="Berthelot C."/>
            <person name="Muffato M."/>
            <person name="Collins J.E."/>
            <person name="Humphray S."/>
            <person name="McLaren K."/>
            <person name="Matthews L."/>
            <person name="McLaren S."/>
            <person name="Sealy I."/>
            <person name="Caccamo M."/>
            <person name="Churcher C."/>
            <person name="Scott C."/>
            <person name="Barrett J.C."/>
            <person name="Koch R."/>
            <person name="Rauch G.J."/>
            <person name="White S."/>
            <person name="Chow W."/>
            <person name="Kilian B."/>
            <person name="Quintais L.T."/>
            <person name="Guerra-Assuncao J.A."/>
            <person name="Zhou Y."/>
            <person name="Gu Y."/>
            <person name="Yen J."/>
            <person name="Vogel J.H."/>
            <person name="Eyre T."/>
            <person name="Redmond S."/>
            <person name="Banerjee R."/>
            <person name="Chi J."/>
            <person name="Fu B."/>
            <person name="Langley E."/>
            <person name="Maguire S.F."/>
            <person name="Laird G.K."/>
            <person name="Lloyd D."/>
            <person name="Kenyon E."/>
            <person name="Donaldson S."/>
            <person name="Sehra H."/>
            <person name="Almeida-King J."/>
            <person name="Loveland J."/>
            <person name="Trevanion S."/>
            <person name="Jones M."/>
            <person name="Quail M."/>
            <person name="Willey D."/>
            <person name="Hunt A."/>
            <person name="Burton J."/>
            <person name="Sims S."/>
            <person name="McLay K."/>
            <person name="Plumb B."/>
            <person name="Davis J."/>
            <person name="Clee C."/>
            <person name="Oliver K."/>
            <person name="Clark R."/>
            <person name="Riddle C."/>
            <person name="Elliot D."/>
            <person name="Threadgold G."/>
            <person name="Harden G."/>
            <person name="Ware D."/>
            <person name="Begum S."/>
            <person name="Mortimore B."/>
            <person name="Kerry G."/>
            <person name="Heath P."/>
            <person name="Phillimore B."/>
            <person name="Tracey A."/>
            <person name="Corby N."/>
            <person name="Dunn M."/>
            <person name="Johnson C."/>
            <person name="Wood J."/>
            <person name="Clark S."/>
            <person name="Pelan S."/>
            <person name="Griffiths G."/>
            <person name="Smith M."/>
            <person name="Glithero R."/>
            <person name="Howden P."/>
            <person name="Barker N."/>
            <person name="Lloyd C."/>
            <person name="Stevens C."/>
            <person name="Harley J."/>
            <person name="Holt K."/>
            <person name="Panagiotidis G."/>
            <person name="Lovell J."/>
            <person name="Beasley H."/>
            <person name="Henderson C."/>
            <person name="Gordon D."/>
            <person name="Auger K."/>
            <person name="Wright D."/>
            <person name="Collins J."/>
            <person name="Raisen C."/>
            <person name="Dyer L."/>
            <person name="Leung K."/>
            <person name="Robertson L."/>
            <person name="Ambridge K."/>
            <person name="Leongamornlert D."/>
            <person name="McGuire S."/>
            <person name="Gilderthorp R."/>
            <person name="Griffiths C."/>
            <person name="Manthravadi D."/>
            <person name="Nichol S."/>
            <person name="Barker G."/>
            <person name="Whitehead S."/>
            <person name="Kay M."/>
            <person name="Brown J."/>
            <person name="Murnane C."/>
            <person name="Gray E."/>
            <person name="Humphries M."/>
            <person name="Sycamore N."/>
            <person name="Barker D."/>
            <person name="Saunders D."/>
            <person name="Wallis J."/>
            <person name="Babbage A."/>
            <person name="Hammond S."/>
            <person name="Mashreghi-Mohammadi M."/>
            <person name="Barr L."/>
            <person name="Martin S."/>
            <person name="Wray P."/>
            <person name="Ellington A."/>
            <person name="Matthews N."/>
            <person name="Ellwood M."/>
            <person name="Woodmansey R."/>
            <person name="Clark G."/>
            <person name="Cooper J."/>
            <person name="Tromans A."/>
            <person name="Grafham D."/>
            <person name="Skuce C."/>
            <person name="Pandian R."/>
            <person name="Andrews R."/>
            <person name="Harrison E."/>
            <person name="Kimberley A."/>
            <person name="Garnett J."/>
            <person name="Fosker N."/>
            <person name="Hall R."/>
            <person name="Garner P."/>
            <person name="Kelly D."/>
            <person name="Bird C."/>
            <person name="Palmer S."/>
            <person name="Gehring I."/>
            <person name="Berger A."/>
            <person name="Dooley C.M."/>
            <person name="Ersan-Urun Z."/>
            <person name="Eser C."/>
            <person name="Geiger H."/>
            <person name="Geisler M."/>
            <person name="Karotki L."/>
            <person name="Kirn A."/>
            <person name="Konantz J."/>
            <person name="Konantz M."/>
            <person name="Oberlander M."/>
            <person name="Rudolph-Geiger S."/>
            <person name="Teucke M."/>
            <person name="Lanz C."/>
            <person name="Raddatz G."/>
            <person name="Osoegawa K."/>
            <person name="Zhu B."/>
            <person name="Rapp A."/>
            <person name="Widaa S."/>
            <person name="Langford C."/>
            <person name="Yang F."/>
            <person name="Schuster S.C."/>
            <person name="Carter N.P."/>
            <person name="Harrow J."/>
            <person name="Ning Z."/>
            <person name="Herrero J."/>
            <person name="Searle S.M."/>
            <person name="Enright A."/>
            <person name="Geisler R."/>
            <person name="Plasterk R.H."/>
            <person name="Lee C."/>
            <person name="Westerfield M."/>
            <person name="de Jong P.J."/>
            <person name="Zon L.I."/>
            <person name="Postlethwait J.H."/>
            <person name="Nusslein-Volhard C."/>
            <person name="Hubbard T.J."/>
            <person name="Roest Crollius H."/>
            <person name="Rogers J."/>
            <person name="Stemple D.L."/>
        </authorList>
    </citation>
    <scope>NUCLEOTIDE SEQUENCE [LARGE SCALE GENOMIC DNA]</scope>
    <source>
        <strain>Tuebingen</strain>
    </source>
</reference>
<reference key="3">
    <citation type="submission" date="2004-07" db="EMBL/GenBank/DDBJ databases">
        <authorList>
            <consortium name="NIH - Zebrafish Gene Collection (ZGC) project"/>
        </authorList>
    </citation>
    <scope>NUCLEOTIDE SEQUENCE [LARGE SCALE MRNA]</scope>
    <source>
        <strain>AB</strain>
        <tissue>Embryo</tissue>
    </source>
</reference>
<reference key="4">
    <citation type="journal article" date="2008" name="J. Proteome Res.">
        <title>Online automated in vivo zebrafish phosphoproteomics: from large-scale analysis down to a single embryo.</title>
        <authorList>
            <person name="Lemeer S."/>
            <person name="Pinkse M.W.H."/>
            <person name="Mohammed S."/>
            <person name="van Breukelen B."/>
            <person name="den Hertog J."/>
            <person name="Slijper M."/>
            <person name="Heck A.J.R."/>
        </authorList>
    </citation>
    <scope>PHOSPHORYLATION [LARGE SCALE ANALYSIS] AT SER-6 AND THR-31</scope>
    <scope>IDENTIFICATION BY MASS SPECTROMETRY</scope>
    <source>
        <tissue>Embryo</tissue>
    </source>
</reference>
<comment type="function">
    <text>Provides the precursors necessary for DNA synthesis. Catalyzes the biosynthesis of deoxyribonucleotides from the corresponding ribonucleotides.</text>
</comment>
<comment type="catalytic activity">
    <reaction evidence="2">
        <text>a 2'-deoxyribonucleoside 5'-diphosphate + [thioredoxin]-disulfide + H2O = a ribonucleoside 5'-diphosphate + [thioredoxin]-dithiol</text>
        <dbReference type="Rhea" id="RHEA:23252"/>
        <dbReference type="Rhea" id="RHEA-COMP:10698"/>
        <dbReference type="Rhea" id="RHEA-COMP:10700"/>
        <dbReference type="ChEBI" id="CHEBI:15377"/>
        <dbReference type="ChEBI" id="CHEBI:29950"/>
        <dbReference type="ChEBI" id="CHEBI:50058"/>
        <dbReference type="ChEBI" id="CHEBI:57930"/>
        <dbReference type="ChEBI" id="CHEBI:73316"/>
        <dbReference type="EC" id="1.17.4.1"/>
    </reaction>
</comment>
<comment type="cofactor">
    <cofactor evidence="1">
        <name>Fe cation</name>
        <dbReference type="ChEBI" id="CHEBI:24875"/>
    </cofactor>
    <text evidence="1">Binds 2 iron ions per subunit.</text>
</comment>
<comment type="subunit">
    <text>Heterodimer of a large and a small subunit.</text>
</comment>
<comment type="subcellular location">
    <subcellularLocation>
        <location>Cytoplasm</location>
    </subcellularLocation>
</comment>
<comment type="similarity">
    <text evidence="5">Belongs to the ribonucleoside diphosphate reductase small chain family.</text>
</comment>
<name>RIR2_DANRE</name>
<protein>
    <recommendedName>
        <fullName>Ribonucleoside-diphosphate reductase subunit M2</fullName>
        <ecNumber>1.17.4.1</ecNumber>
    </recommendedName>
    <alternativeName>
        <fullName>Ribonucleotide reductase protein R2 class I</fullName>
    </alternativeName>
    <alternativeName>
        <fullName>Ribonucleotide reductase small chain</fullName>
    </alternativeName>
    <alternativeName>
        <fullName>Ribonucleotide reductase small subunit</fullName>
    </alternativeName>
</protein>
<evidence type="ECO:0000250" key="1"/>
<evidence type="ECO:0000255" key="2">
    <source>
        <dbReference type="PROSITE-ProRule" id="PRU10014"/>
    </source>
</evidence>
<evidence type="ECO:0000256" key="3">
    <source>
        <dbReference type="SAM" id="MobiDB-lite"/>
    </source>
</evidence>
<evidence type="ECO:0000269" key="4">
    <source>
    </source>
</evidence>
<evidence type="ECO:0000305" key="5"/>
<dbReference type="EC" id="1.17.4.1"/>
<dbReference type="EMBL" id="U57965">
    <property type="protein sequence ID" value="AAB37103.1"/>
    <property type="molecule type" value="mRNA"/>
</dbReference>
<dbReference type="EMBL" id="BX248136">
    <property type="protein sequence ID" value="CAI21240.1"/>
    <property type="molecule type" value="Genomic_DNA"/>
</dbReference>
<dbReference type="EMBL" id="BC044355">
    <property type="protein sequence ID" value="AAH44355.1"/>
    <property type="molecule type" value="mRNA"/>
</dbReference>
<dbReference type="EMBL" id="BC075746">
    <property type="protein sequence ID" value="AAH75746.1"/>
    <property type="molecule type" value="mRNA"/>
</dbReference>
<dbReference type="RefSeq" id="NP_571525.1">
    <property type="nucleotide sequence ID" value="NM_131450.3"/>
</dbReference>
<dbReference type="RefSeq" id="XP_002665783.1">
    <property type="nucleotide sequence ID" value="XM_002665737.4"/>
</dbReference>
<dbReference type="SMR" id="P79733"/>
<dbReference type="FunCoup" id="P79733">
    <property type="interactions" value="1183"/>
</dbReference>
<dbReference type="STRING" id="7955.ENSDARP00000008907"/>
<dbReference type="iPTMnet" id="P79733"/>
<dbReference type="PaxDb" id="7955-ENSDARP00000008907"/>
<dbReference type="Ensembl" id="ENSDART00000027851">
    <property type="protein sequence ID" value="ENSDARP00000008907"/>
    <property type="gene ID" value="ENSDARG00000020711"/>
</dbReference>
<dbReference type="Ensembl" id="ENSDART00000112155">
    <property type="protein sequence ID" value="ENSDARP00000103553"/>
    <property type="gene ID" value="ENSDARG00000078069"/>
</dbReference>
<dbReference type="Ensembl" id="ENSDART00000170972">
    <property type="protein sequence ID" value="ENSDARP00000133583"/>
    <property type="gene ID" value="ENSDARG00000020711"/>
</dbReference>
<dbReference type="GeneID" id="30733"/>
<dbReference type="KEGG" id="dre:30733"/>
<dbReference type="AGR" id="ZFIN:ZDB-GENE-990415-25"/>
<dbReference type="CTD" id="6241"/>
<dbReference type="ZFIN" id="ZDB-GENE-990415-25">
    <property type="gene designation" value="rrm2l"/>
</dbReference>
<dbReference type="eggNOG" id="KOG1567">
    <property type="taxonomic scope" value="Eukaryota"/>
</dbReference>
<dbReference type="InParanoid" id="P79733"/>
<dbReference type="OMA" id="NTIPCVA"/>
<dbReference type="OrthoDB" id="10248373at2759"/>
<dbReference type="PhylomeDB" id="P79733"/>
<dbReference type="TreeFam" id="TF300465"/>
<dbReference type="Reactome" id="R-DRE-499943">
    <property type="pathway name" value="Interconversion of nucleotide di- and triphosphates"/>
</dbReference>
<dbReference type="PRO" id="PR:P79733"/>
<dbReference type="Proteomes" id="UP000000437">
    <property type="component" value="Chromosome 19"/>
</dbReference>
<dbReference type="Bgee" id="ENSDARG00000020711">
    <property type="expression patterns" value="Expressed in early embryo and 24 other cell types or tissues"/>
</dbReference>
<dbReference type="ExpressionAtlas" id="P79733">
    <property type="expression patterns" value="baseline and differential"/>
</dbReference>
<dbReference type="GO" id="GO:0005829">
    <property type="term" value="C:cytosol"/>
    <property type="evidence" value="ECO:0000318"/>
    <property type="project" value="GO_Central"/>
</dbReference>
<dbReference type="GO" id="GO:0046872">
    <property type="term" value="F:metal ion binding"/>
    <property type="evidence" value="ECO:0007669"/>
    <property type="project" value="UniProtKB-KW"/>
</dbReference>
<dbReference type="GO" id="GO:0004748">
    <property type="term" value="F:ribonucleoside-diphosphate reductase activity, thioredoxin disulfide as acceptor"/>
    <property type="evidence" value="ECO:0000318"/>
    <property type="project" value="GO_Central"/>
</dbReference>
<dbReference type="GO" id="GO:0009263">
    <property type="term" value="P:deoxyribonucleotide biosynthetic process"/>
    <property type="evidence" value="ECO:0000318"/>
    <property type="project" value="GO_Central"/>
</dbReference>
<dbReference type="CDD" id="cd01049">
    <property type="entry name" value="RNRR2"/>
    <property type="match status" value="1"/>
</dbReference>
<dbReference type="FunFam" id="1.10.620.20:FF:000004">
    <property type="entry name" value="Ribonucleoside-diphosphate reductase subunit M2 B"/>
    <property type="match status" value="1"/>
</dbReference>
<dbReference type="Gene3D" id="1.10.620.20">
    <property type="entry name" value="Ribonucleotide Reductase, subunit A"/>
    <property type="match status" value="1"/>
</dbReference>
<dbReference type="InterPro" id="IPR009078">
    <property type="entry name" value="Ferritin-like_SF"/>
</dbReference>
<dbReference type="InterPro" id="IPR012348">
    <property type="entry name" value="RNR-like"/>
</dbReference>
<dbReference type="InterPro" id="IPR033909">
    <property type="entry name" value="RNR_small"/>
</dbReference>
<dbReference type="InterPro" id="IPR030475">
    <property type="entry name" value="RNR_small_AS"/>
</dbReference>
<dbReference type="InterPro" id="IPR000358">
    <property type="entry name" value="RNR_small_fam"/>
</dbReference>
<dbReference type="PANTHER" id="PTHR23409">
    <property type="entry name" value="RIBONUCLEOSIDE-DIPHOSPHATE REDUCTASE SMALL CHAIN"/>
    <property type="match status" value="1"/>
</dbReference>
<dbReference type="PANTHER" id="PTHR23409:SF20">
    <property type="entry name" value="RIBONUCLEOSIDE-DIPHOSPHATE REDUCTASE SUBUNIT M2"/>
    <property type="match status" value="1"/>
</dbReference>
<dbReference type="Pfam" id="PF00268">
    <property type="entry name" value="Ribonuc_red_sm"/>
    <property type="match status" value="1"/>
</dbReference>
<dbReference type="PIRSF" id="PIRSF000355">
    <property type="entry name" value="NrdB"/>
    <property type="match status" value="1"/>
</dbReference>
<dbReference type="SUPFAM" id="SSF47240">
    <property type="entry name" value="Ferritin-like"/>
    <property type="match status" value="1"/>
</dbReference>
<dbReference type="PROSITE" id="PS00368">
    <property type="entry name" value="RIBORED_SMALL"/>
    <property type="match status" value="1"/>
</dbReference>